<dbReference type="EMBL" id="M84157">
    <property type="protein sequence ID" value="AAA34228.1"/>
    <property type="molecule type" value="Genomic_DNA"/>
</dbReference>
<dbReference type="EMBL" id="U37795">
    <property type="protein sequence ID" value="AAA99766.1"/>
    <property type="molecule type" value="Genomic_DNA"/>
</dbReference>
<dbReference type="EMBL" id="CM003144">
    <property type="protein sequence ID" value="KIS69865.1"/>
    <property type="molecule type" value="Genomic_DNA"/>
</dbReference>
<dbReference type="PIR" id="C42087">
    <property type="entry name" value="C42087"/>
</dbReference>
<dbReference type="RefSeq" id="XP_011388683.1">
    <property type="nucleotide sequence ID" value="XM_011390381.1"/>
</dbReference>
<dbReference type="FunCoup" id="P31302">
    <property type="interactions" value="77"/>
</dbReference>
<dbReference type="STRING" id="237631.P31302"/>
<dbReference type="EnsemblFungi" id="KIS69865">
    <property type="protein sequence ID" value="KIS69865"/>
    <property type="gene ID" value="UMAG_02383"/>
</dbReference>
<dbReference type="GeneID" id="23563142"/>
<dbReference type="KEGG" id="uma:UMAG_02383"/>
<dbReference type="VEuPathDB" id="FungiDB:UMAG_02383"/>
<dbReference type="eggNOG" id="ENOG502S44N">
    <property type="taxonomic scope" value="Eukaryota"/>
</dbReference>
<dbReference type="HOGENOM" id="CLU_027592_0_1_1"/>
<dbReference type="InParanoid" id="P31302"/>
<dbReference type="OMA" id="ATTEICC"/>
<dbReference type="OrthoDB" id="2874149at2759"/>
<dbReference type="Proteomes" id="UP000000561">
    <property type="component" value="Chromosome 5"/>
</dbReference>
<dbReference type="GO" id="GO:0005886">
    <property type="term" value="C:plasma membrane"/>
    <property type="evidence" value="ECO:0000318"/>
    <property type="project" value="GO_Central"/>
</dbReference>
<dbReference type="GO" id="GO:0004933">
    <property type="term" value="F:mating-type a-factor pheromone receptor activity"/>
    <property type="evidence" value="ECO:0007669"/>
    <property type="project" value="InterPro"/>
</dbReference>
<dbReference type="GO" id="GO:0004932">
    <property type="term" value="F:mating-type factor pheromone receptor activity"/>
    <property type="evidence" value="ECO:0000318"/>
    <property type="project" value="GO_Central"/>
</dbReference>
<dbReference type="GO" id="GO:0000750">
    <property type="term" value="P:pheromone-dependent signal transduction involved in conjugation with cellular fusion"/>
    <property type="evidence" value="ECO:0000318"/>
    <property type="project" value="GO_Central"/>
</dbReference>
<dbReference type="CDD" id="cd14966">
    <property type="entry name" value="7tmD_STE3"/>
    <property type="match status" value="1"/>
</dbReference>
<dbReference type="InterPro" id="IPR001546">
    <property type="entry name" value="GPCR_Pheromne_A_rcpt"/>
</dbReference>
<dbReference type="InterPro" id="IPR001499">
    <property type="entry name" value="GPCR_STE3"/>
</dbReference>
<dbReference type="PANTHER" id="PTHR28097">
    <property type="entry name" value="PHEROMONE A FACTOR RECEPTOR"/>
    <property type="match status" value="1"/>
</dbReference>
<dbReference type="PANTHER" id="PTHR28097:SF1">
    <property type="entry name" value="PHEROMONE A FACTOR RECEPTOR"/>
    <property type="match status" value="1"/>
</dbReference>
<dbReference type="Pfam" id="PF02076">
    <property type="entry name" value="STE3"/>
    <property type="match status" value="1"/>
</dbReference>
<dbReference type="PRINTS" id="PR00899">
    <property type="entry name" value="GPCRSTE3"/>
</dbReference>
<dbReference type="PRINTS" id="PR00900">
    <property type="entry name" value="PHEROMONEAR"/>
</dbReference>
<proteinExistence type="inferred from homology"/>
<feature type="chain" id="PRO_0000195077" description="Pheromone receptor 1">
    <location>
        <begin position="1"/>
        <end position="357"/>
    </location>
</feature>
<feature type="transmembrane region" description="Helical; Name=1" evidence="1">
    <location>
        <begin position="5"/>
        <end position="25"/>
    </location>
</feature>
<feature type="transmembrane region" description="Helical; Name=2" evidence="1">
    <location>
        <begin position="32"/>
        <end position="52"/>
    </location>
</feature>
<feature type="transmembrane region" description="Helical; Name=3" evidence="1">
    <location>
        <begin position="67"/>
        <end position="90"/>
    </location>
</feature>
<feature type="transmembrane region" description="Helical; Name=4" evidence="1">
    <location>
        <begin position="110"/>
        <end position="130"/>
    </location>
</feature>
<feature type="transmembrane region" description="Helical; Name=5" evidence="1">
    <location>
        <begin position="145"/>
        <end position="165"/>
    </location>
</feature>
<feature type="transmembrane region" description="Helical; Name=6" evidence="1">
    <location>
        <begin position="206"/>
        <end position="226"/>
    </location>
</feature>
<feature type="transmembrane region" description="Helical; Name=7" evidence="1">
    <location>
        <begin position="268"/>
        <end position="288"/>
    </location>
</feature>
<feature type="region of interest" description="Disordered" evidence="2">
    <location>
        <begin position="338"/>
        <end position="357"/>
    </location>
</feature>
<feature type="compositionally biased region" description="Basic and acidic residues" evidence="2">
    <location>
        <begin position="343"/>
        <end position="357"/>
    </location>
</feature>
<accession>P31302</accession>
<accession>A0A0D1E644</accession>
<accession>Q4PBY0</accession>
<keyword id="KW-0297">G-protein coupled receptor</keyword>
<keyword id="KW-0472">Membrane</keyword>
<keyword id="KW-0589">Pheromone response</keyword>
<keyword id="KW-0675">Receptor</keyword>
<keyword id="KW-1185">Reference proteome</keyword>
<keyword id="KW-0807">Transducer</keyword>
<keyword id="KW-0812">Transmembrane</keyword>
<keyword id="KW-1133">Transmembrane helix</keyword>
<evidence type="ECO:0000255" key="1"/>
<evidence type="ECO:0000256" key="2">
    <source>
        <dbReference type="SAM" id="MobiDB-lite"/>
    </source>
</evidence>
<evidence type="ECO:0000305" key="3"/>
<sequence>MLDHITPFFALVAFFLVLMPFAWHIKSKNVGLIMLSIWLMLGNLDNFVNSMVWWKTTADLAPAYCELSVRLRHLLFIAIPASNLAIARKLESIASTRQVRAGPGDHRRAVIIDLLICLGIPIIYTSLMIVNQSNRYGILEEAGCWPMMVFSWLWVLLVAAPVIVVSLCSAVYSALAFRWFWVRRRQFQAVLASSASTINRSHYVRLLLLTAIDMLLFFPIYVGTIAAQIKSSISIPYGSWSSVHTGFNQIPQYPASLVLMENTFQRNLILARLVCPLSAYIFFAMFGLGLEVRQGYKEAFHRALLFCRLRKEPKASALQHVVADIEVVTFRSHDTFDANTSTKSEKSDIDMRGSEAA</sequence>
<gene>
    <name type="primary">PRA1</name>
    <name type="ORF">UMAG_02383</name>
</gene>
<protein>
    <recommendedName>
        <fullName>Pheromone receptor 1</fullName>
    </recommendedName>
</protein>
<comment type="function">
    <text>Receptor for the A2 pheromone, a prenylated mating factor.</text>
</comment>
<comment type="subcellular location">
    <subcellularLocation>
        <location>Membrane</location>
        <topology>Multi-pass membrane protein</topology>
    </subcellularLocation>
</comment>
<comment type="similarity">
    <text evidence="3">Belongs to the G-protein coupled receptor 4 family.</text>
</comment>
<reference key="1">
    <citation type="journal article" date="1992" name="Cell">
        <title>The a mating type locus of U. maydis specifies cell signaling components.</title>
        <authorList>
            <person name="Boelker M."/>
            <person name="Urban M."/>
            <person name="Kahmann R."/>
        </authorList>
    </citation>
    <scope>NUCLEOTIDE SEQUENCE [GENOMIC DNA]</scope>
</reference>
<reference key="2">
    <citation type="journal article" date="2006" name="Nature">
        <title>Insights from the genome of the biotrophic fungal plant pathogen Ustilago maydis.</title>
        <authorList>
            <person name="Kaemper J."/>
            <person name="Kahmann R."/>
            <person name="Boelker M."/>
            <person name="Ma L.-J."/>
            <person name="Brefort T."/>
            <person name="Saville B.J."/>
            <person name="Banuett F."/>
            <person name="Kronstad J.W."/>
            <person name="Gold S.E."/>
            <person name="Mueller O."/>
            <person name="Perlin M.H."/>
            <person name="Woesten H.A.B."/>
            <person name="de Vries R."/>
            <person name="Ruiz-Herrera J."/>
            <person name="Reynaga-Pena C.G."/>
            <person name="Snetselaar K."/>
            <person name="McCann M."/>
            <person name="Perez-Martin J."/>
            <person name="Feldbruegge M."/>
            <person name="Basse C.W."/>
            <person name="Steinberg G."/>
            <person name="Ibeas J.I."/>
            <person name="Holloman W."/>
            <person name="Guzman P."/>
            <person name="Farman M.L."/>
            <person name="Stajich J.E."/>
            <person name="Sentandreu R."/>
            <person name="Gonzalez-Prieto J.M."/>
            <person name="Kennell J.C."/>
            <person name="Molina L."/>
            <person name="Schirawski J."/>
            <person name="Mendoza-Mendoza A."/>
            <person name="Greilinger D."/>
            <person name="Muench K."/>
            <person name="Roessel N."/>
            <person name="Scherer M."/>
            <person name="Vranes M."/>
            <person name="Ladendorf O."/>
            <person name="Vincon V."/>
            <person name="Fuchs U."/>
            <person name="Sandrock B."/>
            <person name="Meng S."/>
            <person name="Ho E.C.H."/>
            <person name="Cahill M.J."/>
            <person name="Boyce K.J."/>
            <person name="Klose J."/>
            <person name="Klosterman S.J."/>
            <person name="Deelstra H.J."/>
            <person name="Ortiz-Castellanos L."/>
            <person name="Li W."/>
            <person name="Sanchez-Alonso P."/>
            <person name="Schreier P.H."/>
            <person name="Haeuser-Hahn I."/>
            <person name="Vaupel M."/>
            <person name="Koopmann E."/>
            <person name="Friedrich G."/>
            <person name="Voss H."/>
            <person name="Schlueter T."/>
            <person name="Margolis J."/>
            <person name="Platt D."/>
            <person name="Swimmer C."/>
            <person name="Gnirke A."/>
            <person name="Chen F."/>
            <person name="Vysotskaia V."/>
            <person name="Mannhaupt G."/>
            <person name="Gueldener U."/>
            <person name="Muensterkoetter M."/>
            <person name="Haase D."/>
            <person name="Oesterheld M."/>
            <person name="Mewes H.-W."/>
            <person name="Mauceli E.W."/>
            <person name="DeCaprio D."/>
            <person name="Wade C.M."/>
            <person name="Butler J."/>
            <person name="Young S.K."/>
            <person name="Jaffe D.B."/>
            <person name="Calvo S.E."/>
            <person name="Nusbaum C."/>
            <person name="Galagan J.E."/>
            <person name="Birren B.W."/>
        </authorList>
    </citation>
    <scope>NUCLEOTIDE SEQUENCE [LARGE SCALE GENOMIC DNA]</scope>
    <source>
        <strain>DSM 14603 / FGSC 9021 / UM521</strain>
    </source>
</reference>
<reference key="3">
    <citation type="submission" date="2014-09" db="EMBL/GenBank/DDBJ databases">
        <authorList>
            <person name="Gueldener U."/>
            <person name="Muensterkoetter M."/>
            <person name="Walter M.C."/>
            <person name="Mannhaupt G."/>
            <person name="Kahmann R."/>
        </authorList>
    </citation>
    <scope>GENOME REANNOTATION</scope>
    <source>
        <strain>DSM 14603 / FGSC 9021 / UM521</strain>
    </source>
</reference>
<organism>
    <name type="scientific">Mycosarcoma maydis</name>
    <name type="common">Corn smut fungus</name>
    <name type="synonym">Ustilago maydis</name>
    <dbReference type="NCBI Taxonomy" id="5270"/>
    <lineage>
        <taxon>Eukaryota</taxon>
        <taxon>Fungi</taxon>
        <taxon>Dikarya</taxon>
        <taxon>Basidiomycota</taxon>
        <taxon>Ustilaginomycotina</taxon>
        <taxon>Ustilaginomycetes</taxon>
        <taxon>Ustilaginales</taxon>
        <taxon>Ustilaginaceae</taxon>
        <taxon>Mycosarcoma</taxon>
    </lineage>
</organism>
<name>PRA1_MYCMD</name>